<organism>
    <name type="scientific">Methanocaldococcus jannaschii (strain ATCC 43067 / DSM 2661 / JAL-1 / JCM 10045 / NBRC 100440)</name>
    <name type="common">Methanococcus jannaschii</name>
    <dbReference type="NCBI Taxonomy" id="243232"/>
    <lineage>
        <taxon>Archaea</taxon>
        <taxon>Methanobacteriati</taxon>
        <taxon>Methanobacteriota</taxon>
        <taxon>Methanomada group</taxon>
        <taxon>Methanococci</taxon>
        <taxon>Methanococcales</taxon>
        <taxon>Methanocaldococcaceae</taxon>
        <taxon>Methanocaldococcus</taxon>
    </lineage>
</organism>
<feature type="chain" id="PRO_0000156858" description="Putative antitoxin MJ0975">
    <location>
        <begin position="1"/>
        <end position="64"/>
    </location>
</feature>
<name>VAPB2_METJA</name>
<evidence type="ECO:0000305" key="1"/>
<sequence>MEIVVDAIYEKGVLKLKKSINLPEGCEVEIKIIPKKISEKTFGILKLSDKEIKEILEEIENGGE</sequence>
<protein>
    <recommendedName>
        <fullName>Putative antitoxin MJ0975</fullName>
    </recommendedName>
</protein>
<keyword id="KW-1185">Reference proteome</keyword>
<keyword id="KW-1277">Toxin-antitoxin system</keyword>
<comment type="function">
    <text evidence="1">Possibly the antitoxin component of a type II toxin-antitoxin (TA) system. Its cognate toxin is VapC2 (Potential).</text>
</comment>
<comment type="similarity">
    <text evidence="1">Belongs to the UPF0165 family.</text>
</comment>
<comment type="sequence caution" evidence="1">
    <conflict type="erroneous initiation">
        <sequence resource="EMBL-CDS" id="AAB98981"/>
    </conflict>
    <text>Extended N-terminus.</text>
</comment>
<dbReference type="EMBL" id="L77117">
    <property type="protein sequence ID" value="AAB98981.1"/>
    <property type="status" value="ALT_INIT"/>
    <property type="molecule type" value="Genomic_DNA"/>
</dbReference>
<dbReference type="PIR" id="G64421">
    <property type="entry name" value="G64421"/>
</dbReference>
<dbReference type="RefSeq" id="WP_064496686.1">
    <property type="nucleotide sequence ID" value="NC_000909.1"/>
</dbReference>
<dbReference type="STRING" id="243232.MJ_0975"/>
<dbReference type="PaxDb" id="243232-MJ_0975"/>
<dbReference type="EnsemblBacteria" id="AAB98981">
    <property type="protein sequence ID" value="AAB98981"/>
    <property type="gene ID" value="MJ_0975"/>
</dbReference>
<dbReference type="GeneID" id="1451873"/>
<dbReference type="KEGG" id="mja:MJ_0975"/>
<dbReference type="eggNOG" id="arCOG08303">
    <property type="taxonomic scope" value="Archaea"/>
</dbReference>
<dbReference type="HOGENOM" id="CLU_200885_3_1_2"/>
<dbReference type="InParanoid" id="Q58385"/>
<dbReference type="Proteomes" id="UP000000805">
    <property type="component" value="Chromosome"/>
</dbReference>
<dbReference type="Gene3D" id="4.10.1150.10">
    <property type="entry name" value="AF2212/PG0164-like"/>
    <property type="match status" value="1"/>
</dbReference>
<dbReference type="InterPro" id="IPR008203">
    <property type="entry name" value="AF2212-like"/>
</dbReference>
<dbReference type="InterPro" id="IPR024069">
    <property type="entry name" value="AF2212-like_dom_sf"/>
</dbReference>
<dbReference type="Pfam" id="PF01954">
    <property type="entry name" value="AF2212-like"/>
    <property type="match status" value="1"/>
</dbReference>
<dbReference type="SUPFAM" id="SSF141694">
    <property type="entry name" value="AF2212/PG0164-like"/>
    <property type="match status" value="1"/>
</dbReference>
<accession>Q58385</accession>
<reference key="1">
    <citation type="journal article" date="1996" name="Science">
        <title>Complete genome sequence of the methanogenic archaeon, Methanococcus jannaschii.</title>
        <authorList>
            <person name="Bult C.J."/>
            <person name="White O."/>
            <person name="Olsen G.J."/>
            <person name="Zhou L."/>
            <person name="Fleischmann R.D."/>
            <person name="Sutton G.G."/>
            <person name="Blake J.A."/>
            <person name="FitzGerald L.M."/>
            <person name="Clayton R.A."/>
            <person name="Gocayne J.D."/>
            <person name="Kerlavage A.R."/>
            <person name="Dougherty B.A."/>
            <person name="Tomb J.-F."/>
            <person name="Adams M.D."/>
            <person name="Reich C.I."/>
            <person name="Overbeek R."/>
            <person name="Kirkness E.F."/>
            <person name="Weinstock K.G."/>
            <person name="Merrick J.M."/>
            <person name="Glodek A."/>
            <person name="Scott J.L."/>
            <person name="Geoghagen N.S.M."/>
            <person name="Weidman J.F."/>
            <person name="Fuhrmann J.L."/>
            <person name="Nguyen D."/>
            <person name="Utterback T.R."/>
            <person name="Kelley J.M."/>
            <person name="Peterson J.D."/>
            <person name="Sadow P.W."/>
            <person name="Hanna M.C."/>
            <person name="Cotton M.D."/>
            <person name="Roberts K.M."/>
            <person name="Hurst M.A."/>
            <person name="Kaine B.P."/>
            <person name="Borodovsky M."/>
            <person name="Klenk H.-P."/>
            <person name="Fraser C.M."/>
            <person name="Smith H.O."/>
            <person name="Woese C.R."/>
            <person name="Venter J.C."/>
        </authorList>
    </citation>
    <scope>NUCLEOTIDE SEQUENCE [LARGE SCALE GENOMIC DNA]</scope>
    <source>
        <strain>ATCC 43067 / DSM 2661 / JAL-1 / JCM 10045 / NBRC 100440</strain>
    </source>
</reference>
<reference key="2">
    <citation type="journal article" date="2005" name="Nucleic Acids Res.">
        <title>Toxin-antitoxin loci are highly abundant in free-living but lost from host-associated prokaryotes.</title>
        <authorList>
            <person name="Pandey D.P."/>
            <person name="Gerdes K."/>
        </authorList>
    </citation>
    <scope>POSSIBLE FUNCTION</scope>
    <source>
        <strain>ATCC 43067 / DSM 2661 / JAL-1 / JCM 10045 / NBRC 100440</strain>
    </source>
</reference>
<proteinExistence type="inferred from homology"/>
<gene>
    <name type="primary">vapB2</name>
    <name type="ordered locus">MJ0975</name>
</gene>